<protein>
    <recommendedName>
        <fullName>Leiomodin-3</fullName>
    </recommendedName>
</protein>
<keyword id="KW-0009">Actin-binding</keyword>
<keyword id="KW-0175">Coiled coil</keyword>
<keyword id="KW-0963">Cytoplasm</keyword>
<keyword id="KW-0206">Cytoskeleton</keyword>
<keyword id="KW-1185">Reference proteome</keyword>
<keyword id="KW-0832">Ubl conjugation</keyword>
<sequence>MSGHSRNSEQEDTLSEELDEDELLANLSPEELKELQSEMEVMAPDPHLPVGMIQKDQTDKAPTGNFNHKSLVDYMYLQKASRRMLEDERVPVSFVQSEKNTQNQREVGDKGIKNMPQFLKEKLNSEILAKKRESNGSNNVQEAEDDDEDEEEEEEDDEDEEEEEEDEEDDEGEEDEDGEQANREKNDAKEQIHNNPGTYQQLATKTAHEQKDTSETKEKGEKKIAKLDPKKLALDTSFLKVSARPSGNQTDLDGSLRRVRQNDPDMKELNLNNIENIPKEMLLDFVNAMKKNKHIKTFSLANVGADESVAFALANMLRENRSVTTLNIESNFITGKGIVAIMRCLQFNETLTELRFHNQRHMLGHHAEMEISRLLKANTTLLKMGYHFELPGPRMVVTNLLTRNQDKRRQKRQEEQQQQQLKEQRKLIAMLENGLGLPPGMWERLGGPMPDPRMQEFFQPASGRPLDAQEVPFGSRKEMIKNPPQPPQCKTDPDSFRVVKLKRIQRKSRMPEAREAQEKTNLKDVIKTLKPVPRNRPPPLVEITPRDQLLNDIRHSNVAYLKPVQLPKELE</sequence>
<reference key="1">
    <citation type="journal article" date="2009" name="PLoS Biol.">
        <title>Lineage-specific biology revealed by a finished genome assembly of the mouse.</title>
        <authorList>
            <person name="Church D.M."/>
            <person name="Goodstadt L."/>
            <person name="Hillier L.W."/>
            <person name="Zody M.C."/>
            <person name="Goldstein S."/>
            <person name="She X."/>
            <person name="Bult C.J."/>
            <person name="Agarwala R."/>
            <person name="Cherry J.L."/>
            <person name="DiCuccio M."/>
            <person name="Hlavina W."/>
            <person name="Kapustin Y."/>
            <person name="Meric P."/>
            <person name="Maglott D."/>
            <person name="Birtle Z."/>
            <person name="Marques A.C."/>
            <person name="Graves T."/>
            <person name="Zhou S."/>
            <person name="Teague B."/>
            <person name="Potamousis K."/>
            <person name="Churas C."/>
            <person name="Place M."/>
            <person name="Herschleb J."/>
            <person name="Runnheim R."/>
            <person name="Forrest D."/>
            <person name="Amos-Landgraf J."/>
            <person name="Schwartz D.C."/>
            <person name="Cheng Z."/>
            <person name="Lindblad-Toh K."/>
            <person name="Eichler E.E."/>
            <person name="Ponting C.P."/>
        </authorList>
    </citation>
    <scope>NUCLEOTIDE SEQUENCE [LARGE SCALE GENOMIC DNA]</scope>
    <source>
        <strain>C57BL/6J</strain>
    </source>
</reference>
<reference key="2">
    <citation type="journal article" date="2004" name="Genome Res.">
        <title>The status, quality, and expansion of the NIH full-length cDNA project: the Mammalian Gene Collection (MGC).</title>
        <authorList>
            <consortium name="The MGC Project Team"/>
        </authorList>
    </citation>
    <scope>NUCLEOTIDE SEQUENCE [LARGE SCALE MRNA]</scope>
</reference>
<reference key="3">
    <citation type="journal article" date="2014" name="J. Clin. Invest.">
        <title>KLHL40 deficiency destabilizes thin filament proteins and promotes nemaline myopathy.</title>
        <authorList>
            <person name="Garg A."/>
            <person name="O'Rourke J."/>
            <person name="Long C."/>
            <person name="Doering J."/>
            <person name="Ravenscroft G."/>
            <person name="Bezprozvannaya S."/>
            <person name="Nelson B.R."/>
            <person name="Beetz N."/>
            <person name="Li L."/>
            <person name="Chen S."/>
            <person name="Laing N.G."/>
            <person name="Grange R.W."/>
            <person name="Bassel-Duby R."/>
            <person name="Olson E.N."/>
        </authorList>
    </citation>
    <scope>INTERACTION WITH KLHL40</scope>
    <scope>SUBCELLULAR LOCATION</scope>
    <scope>UBIQUITINATION</scope>
</reference>
<reference key="4">
    <citation type="journal article" date="2015" name="J. Clin. Invest.">
        <title>Severe myopathy in mice lacking the MEF2/SRF-dependent gene leiomodin-3.</title>
        <authorList>
            <person name="Cenik B.K."/>
            <person name="Garg A."/>
            <person name="McAnally J.R."/>
            <person name="Shelton J.M."/>
            <person name="Richardson J.A."/>
            <person name="Bassel-Duby R."/>
            <person name="Olson E.N."/>
            <person name="Liu N."/>
        </authorList>
    </citation>
    <scope>FUNCTION</scope>
    <scope>TISSUE SPECIFICITY</scope>
    <scope>DEVELOPMENTAL STAGE</scope>
    <scope>INDUCTION</scope>
    <scope>DISRUPTION PHENOTYPE</scope>
</reference>
<reference key="5">
    <citation type="journal article" date="2015" name="Dis. Model. Mech.">
        <title>Leiomodin-3-deficient mice display nemaline myopathy with fast-myofiber atrophy.</title>
        <authorList>
            <person name="Tian L."/>
            <person name="Ding S."/>
            <person name="You Y."/>
            <person name="Li T.R."/>
            <person name="Liu Y."/>
            <person name="Wu X."/>
            <person name="Sun L."/>
            <person name="Xu T."/>
        </authorList>
    </citation>
    <scope>FUNCTION</scope>
    <scope>DISRUPTION PHENOTYPE</scope>
</reference>
<feature type="chain" id="PRO_0000439646" description="Leiomodin-3">
    <location>
        <begin position="1"/>
        <end position="571"/>
    </location>
</feature>
<feature type="domain" description="WH2" evidence="3">
    <location>
        <begin position="545"/>
        <end position="564"/>
    </location>
</feature>
<feature type="region of interest" description="Disordered" evidence="4">
    <location>
        <begin position="1"/>
        <end position="29"/>
    </location>
</feature>
<feature type="region of interest" description="Disordered" evidence="4">
    <location>
        <begin position="46"/>
        <end position="67"/>
    </location>
</feature>
<feature type="region of interest" description="Disordered" evidence="4">
    <location>
        <begin position="91"/>
        <end position="228"/>
    </location>
</feature>
<feature type="coiled-coil region" evidence="2">
    <location>
        <begin position="397"/>
        <end position="436"/>
    </location>
</feature>
<feature type="compositionally biased region" description="Acidic residues" evidence="4">
    <location>
        <begin position="10"/>
        <end position="23"/>
    </location>
</feature>
<feature type="compositionally biased region" description="Polar residues" evidence="4">
    <location>
        <begin position="94"/>
        <end position="105"/>
    </location>
</feature>
<feature type="compositionally biased region" description="Basic and acidic residues" evidence="4">
    <location>
        <begin position="119"/>
        <end position="134"/>
    </location>
</feature>
<feature type="compositionally biased region" description="Acidic residues" evidence="4">
    <location>
        <begin position="142"/>
        <end position="179"/>
    </location>
</feature>
<feature type="compositionally biased region" description="Basic and acidic residues" evidence="4">
    <location>
        <begin position="180"/>
        <end position="192"/>
    </location>
</feature>
<feature type="compositionally biased region" description="Polar residues" evidence="4">
    <location>
        <begin position="193"/>
        <end position="204"/>
    </location>
</feature>
<feature type="compositionally biased region" description="Basic and acidic residues" evidence="4">
    <location>
        <begin position="206"/>
        <end position="228"/>
    </location>
</feature>
<feature type="sequence conflict" description="In Ref. 2; AAI27158." evidence="8" ref="2">
    <original>S</original>
    <variation>N</variation>
    <location>
        <position position="93"/>
    </location>
</feature>
<feature type="sequence conflict" description="In Ref. 2; AAI27158." evidence="8" ref="2">
    <location>
        <position position="150"/>
    </location>
</feature>
<feature type="sequence conflict" description="In Ref. 2; AAI27158." evidence="8" ref="2">
    <original>Y</original>
    <variation>C</variation>
    <location>
        <position position="199"/>
    </location>
</feature>
<feature type="sequence conflict" description="In Ref. 2; AAI27158." evidence="8" ref="2">
    <original>H</original>
    <variation>D</variation>
    <location>
        <position position="208"/>
    </location>
</feature>
<comment type="function">
    <text evidence="1 7">Essential for the organization of sarcomeric actin thin filaments in skeletal muscle (PubMed:25774500, PubMed:26035871). Increases the rate of actin polymerization (By similarity).</text>
</comment>
<comment type="subunit">
    <text evidence="1 5">May interact with tropomyosin alpha (TPM1/2) N-terminus (By similarity). Interacts with KLHL40; leading to stabilization (PubMed:24960163).</text>
</comment>
<comment type="subcellular location">
    <subcellularLocation>
        <location evidence="1">Cytoplasm</location>
    </subcellularLocation>
    <subcellularLocation>
        <location evidence="5">Cytoplasm</location>
        <location evidence="5">Myofibril</location>
        <location evidence="5">Sarcomere</location>
        <location evidence="5">A band</location>
    </subcellularLocation>
    <subcellularLocation>
        <location evidence="1">Cytoplasm</location>
        <location evidence="1">Myofibril</location>
        <location evidence="1">Sarcomere</location>
        <location evidence="1">M line</location>
    </subcellularLocation>
    <subcellularLocation>
        <location evidence="1">Cytoplasm</location>
        <location evidence="1">Cytoskeleton</location>
    </subcellularLocation>
    <text evidence="1">Highly expressed in nonstriated areas of developing myotubes, where it shows a granular cytoplasmic pattern. In sarcomeres, highly expressed in the M band region and, at lower levels, along actin thin filaments. Not detected in Z-disks. In sarcomeres, may be located near, but not at, actin thin filament pointed end.</text>
</comment>
<comment type="tissue specificity">
    <text evidence="6">Skeletal muscle and heart-specific (at protein level).</text>
</comment>
<comment type="developmental stage">
    <text evidence="6">Expressed by 15.5 dpc in both skeletal muscle and heart. Expression is maintained throughout adulthood.</text>
</comment>
<comment type="induction">
    <text evidence="6">Expression is regulated by SRF and MEF2.</text>
</comment>
<comment type="PTM">
    <text evidence="5">Ubiquitinated, leading to its degradation. Interaction with KLHL40 negatively regulates ubiquitination and degradation.</text>
</comment>
<comment type="disruption phenotype">
    <text evidence="6 7">Mice show severe muscle weakness and postnatal growth retardation. Skeletal muscles show the presence of nemaline bodies and have disorganized sarcomeric structures. Muscle atrophy is specific to the fast fibers.</text>
</comment>
<comment type="similarity">
    <text evidence="8">Belongs to the tropomodulin family.</text>
</comment>
<comment type="sequence caution" evidence="8">
    <conflict type="erroneous initiation">
        <sequence resource="EMBL-CDS" id="AAI17773"/>
    </conflict>
    <text>Extended N-terminus.</text>
</comment>
<evidence type="ECO:0000250" key="1">
    <source>
        <dbReference type="UniProtKB" id="Q0VAK6"/>
    </source>
</evidence>
<evidence type="ECO:0000255" key="2"/>
<evidence type="ECO:0000255" key="3">
    <source>
        <dbReference type="PROSITE-ProRule" id="PRU00406"/>
    </source>
</evidence>
<evidence type="ECO:0000256" key="4">
    <source>
        <dbReference type="SAM" id="MobiDB-lite"/>
    </source>
</evidence>
<evidence type="ECO:0000269" key="5">
    <source>
    </source>
</evidence>
<evidence type="ECO:0000269" key="6">
    <source>
    </source>
</evidence>
<evidence type="ECO:0000269" key="7">
    <source>
    </source>
</evidence>
<evidence type="ECO:0000305" key="8"/>
<evidence type="ECO:0000312" key="9">
    <source>
        <dbReference type="MGI" id="MGI:2444169"/>
    </source>
</evidence>
<dbReference type="EMBL" id="AC155724">
    <property type="status" value="NOT_ANNOTATED_CDS"/>
    <property type="molecule type" value="Genomic_DNA"/>
</dbReference>
<dbReference type="EMBL" id="BC117772">
    <property type="protein sequence ID" value="AAI17773.1"/>
    <property type="status" value="ALT_INIT"/>
    <property type="molecule type" value="mRNA"/>
</dbReference>
<dbReference type="EMBL" id="BC127157">
    <property type="protein sequence ID" value="AAI27158.1"/>
    <property type="molecule type" value="mRNA"/>
</dbReference>
<dbReference type="CCDS" id="CCDS39576.1"/>
<dbReference type="RefSeq" id="NP_001074626.1">
    <property type="nucleotide sequence ID" value="NM_001081157.2"/>
</dbReference>
<dbReference type="RefSeq" id="XP_006506333.1">
    <property type="nucleotide sequence ID" value="XM_006506270.5"/>
</dbReference>
<dbReference type="RefSeq" id="XP_006506334.1">
    <property type="nucleotide sequence ID" value="XM_006506271.5"/>
</dbReference>
<dbReference type="SMR" id="E9QA62"/>
<dbReference type="FunCoup" id="E9QA62">
    <property type="interactions" value="58"/>
</dbReference>
<dbReference type="STRING" id="10090.ENSMUSP00000093315"/>
<dbReference type="iPTMnet" id="E9QA62"/>
<dbReference type="PhosphoSitePlus" id="E9QA62"/>
<dbReference type="jPOST" id="E9QA62"/>
<dbReference type="PaxDb" id="10090-ENSMUSP00000093315"/>
<dbReference type="ProteomicsDB" id="252482"/>
<dbReference type="Antibodypedia" id="46385">
    <property type="antibodies" value="41 antibodies from 17 providers"/>
</dbReference>
<dbReference type="DNASU" id="320502"/>
<dbReference type="Ensembl" id="ENSMUST00000095655.4">
    <property type="protein sequence ID" value="ENSMUSP00000093315.3"/>
    <property type="gene ID" value="ENSMUSG00000044086.9"/>
</dbReference>
<dbReference type="GeneID" id="320502"/>
<dbReference type="KEGG" id="mmu:320502"/>
<dbReference type="UCSC" id="uc009das.1">
    <property type="organism name" value="mouse"/>
</dbReference>
<dbReference type="AGR" id="MGI:2444169"/>
<dbReference type="CTD" id="56203"/>
<dbReference type="MGI" id="MGI:2444169">
    <property type="gene designation" value="Lmod3"/>
</dbReference>
<dbReference type="VEuPathDB" id="HostDB:ENSMUSG00000044086"/>
<dbReference type="eggNOG" id="KOG3735">
    <property type="taxonomic scope" value="Eukaryota"/>
</dbReference>
<dbReference type="GeneTree" id="ENSGT00940000159731"/>
<dbReference type="HOGENOM" id="CLU_031052_4_1_1"/>
<dbReference type="InParanoid" id="E9QA62"/>
<dbReference type="OMA" id="GMWERLG"/>
<dbReference type="OrthoDB" id="2163268at2759"/>
<dbReference type="PhylomeDB" id="E9QA62"/>
<dbReference type="TreeFam" id="TF315841"/>
<dbReference type="BioGRID-ORCS" id="320502">
    <property type="hits" value="3 hits in 76 CRISPR screens"/>
</dbReference>
<dbReference type="ChiTaRS" id="Lmod3">
    <property type="organism name" value="mouse"/>
</dbReference>
<dbReference type="PRO" id="PR:E9QA62"/>
<dbReference type="Proteomes" id="UP000000589">
    <property type="component" value="Chromosome 6"/>
</dbReference>
<dbReference type="RNAct" id="E9QA62">
    <property type="molecule type" value="protein"/>
</dbReference>
<dbReference type="Bgee" id="ENSMUSG00000044086">
    <property type="expression patterns" value="Expressed in soleus muscle and 110 other cell types or tissues"/>
</dbReference>
<dbReference type="GO" id="GO:0031672">
    <property type="term" value="C:A band"/>
    <property type="evidence" value="ECO:0000314"/>
    <property type="project" value="MGI"/>
</dbReference>
<dbReference type="GO" id="GO:0031430">
    <property type="term" value="C:M band"/>
    <property type="evidence" value="ECO:0007669"/>
    <property type="project" value="UniProtKB-SubCell"/>
</dbReference>
<dbReference type="GO" id="GO:0005865">
    <property type="term" value="C:striated muscle thin filament"/>
    <property type="evidence" value="ECO:0007669"/>
    <property type="project" value="Ensembl"/>
</dbReference>
<dbReference type="GO" id="GO:0003785">
    <property type="term" value="F:actin monomer binding"/>
    <property type="evidence" value="ECO:0007669"/>
    <property type="project" value="Ensembl"/>
</dbReference>
<dbReference type="GO" id="GO:0005523">
    <property type="term" value="F:tropomyosin binding"/>
    <property type="evidence" value="ECO:0007669"/>
    <property type="project" value="Ensembl"/>
</dbReference>
<dbReference type="GO" id="GO:0045010">
    <property type="term" value="P:actin nucleation"/>
    <property type="evidence" value="ECO:0007669"/>
    <property type="project" value="Ensembl"/>
</dbReference>
<dbReference type="GO" id="GO:0051694">
    <property type="term" value="P:pointed-end actin filament capping"/>
    <property type="evidence" value="ECO:0007669"/>
    <property type="project" value="InterPro"/>
</dbReference>
<dbReference type="GO" id="GO:0048743">
    <property type="term" value="P:positive regulation of skeletal muscle fiber development"/>
    <property type="evidence" value="ECO:0007669"/>
    <property type="project" value="Ensembl"/>
</dbReference>
<dbReference type="GO" id="GO:0048741">
    <property type="term" value="P:skeletal muscle fiber development"/>
    <property type="evidence" value="ECO:0000315"/>
    <property type="project" value="UniProtKB"/>
</dbReference>
<dbReference type="GO" id="GO:0030240">
    <property type="term" value="P:skeletal muscle thin filament assembly"/>
    <property type="evidence" value="ECO:0007669"/>
    <property type="project" value="Ensembl"/>
</dbReference>
<dbReference type="GO" id="GO:0006941">
    <property type="term" value="P:striated muscle contraction"/>
    <property type="evidence" value="ECO:0007669"/>
    <property type="project" value="Ensembl"/>
</dbReference>
<dbReference type="FunFam" id="3.80.10.10:FF:000078">
    <property type="entry name" value="Leiomodin 3"/>
    <property type="match status" value="1"/>
</dbReference>
<dbReference type="Gene3D" id="3.80.10.10">
    <property type="entry name" value="Ribonuclease Inhibitor"/>
    <property type="match status" value="1"/>
</dbReference>
<dbReference type="InterPro" id="IPR032675">
    <property type="entry name" value="LRR_dom_sf"/>
</dbReference>
<dbReference type="InterPro" id="IPR004934">
    <property type="entry name" value="TMOD"/>
</dbReference>
<dbReference type="PANTHER" id="PTHR10901:SF3">
    <property type="entry name" value="LEIOMODIN-3"/>
    <property type="match status" value="1"/>
</dbReference>
<dbReference type="PANTHER" id="PTHR10901">
    <property type="entry name" value="TROPOMODULIN"/>
    <property type="match status" value="1"/>
</dbReference>
<dbReference type="Pfam" id="PF03250">
    <property type="entry name" value="Tropomodulin"/>
    <property type="match status" value="1"/>
</dbReference>
<dbReference type="SUPFAM" id="SSF52047">
    <property type="entry name" value="RNI-like"/>
    <property type="match status" value="1"/>
</dbReference>
<accession>E9QA62</accession>
<accession>A0AUN8</accession>
<accession>A0JP45</accession>
<gene>
    <name evidence="9" type="primary">Lmod3</name>
</gene>
<organism>
    <name type="scientific">Mus musculus</name>
    <name type="common">Mouse</name>
    <dbReference type="NCBI Taxonomy" id="10090"/>
    <lineage>
        <taxon>Eukaryota</taxon>
        <taxon>Metazoa</taxon>
        <taxon>Chordata</taxon>
        <taxon>Craniata</taxon>
        <taxon>Vertebrata</taxon>
        <taxon>Euteleostomi</taxon>
        <taxon>Mammalia</taxon>
        <taxon>Eutheria</taxon>
        <taxon>Euarchontoglires</taxon>
        <taxon>Glires</taxon>
        <taxon>Rodentia</taxon>
        <taxon>Myomorpha</taxon>
        <taxon>Muroidea</taxon>
        <taxon>Muridae</taxon>
        <taxon>Murinae</taxon>
        <taxon>Mus</taxon>
        <taxon>Mus</taxon>
    </lineage>
</organism>
<proteinExistence type="evidence at protein level"/>
<name>LMOD3_MOUSE</name>